<feature type="chain" id="PRO_0000374486" description="tRNA-2-methylthio-N(6)-dimethylallyladenosine synthase">
    <location>
        <begin position="1"/>
        <end position="472"/>
    </location>
</feature>
<feature type="domain" description="MTTase N-terminal" evidence="1">
    <location>
        <begin position="22"/>
        <end position="142"/>
    </location>
</feature>
<feature type="domain" description="Radical SAM core" evidence="2">
    <location>
        <begin position="169"/>
        <end position="403"/>
    </location>
</feature>
<feature type="domain" description="TRAM" evidence="1">
    <location>
        <begin position="404"/>
        <end position="466"/>
    </location>
</feature>
<feature type="binding site" evidence="1">
    <location>
        <position position="31"/>
    </location>
    <ligand>
        <name>[4Fe-4S] cluster</name>
        <dbReference type="ChEBI" id="CHEBI:49883"/>
        <label>1</label>
    </ligand>
</feature>
<feature type="binding site" evidence="1">
    <location>
        <position position="67"/>
    </location>
    <ligand>
        <name>[4Fe-4S] cluster</name>
        <dbReference type="ChEBI" id="CHEBI:49883"/>
        <label>1</label>
    </ligand>
</feature>
<feature type="binding site" evidence="1">
    <location>
        <position position="105"/>
    </location>
    <ligand>
        <name>[4Fe-4S] cluster</name>
        <dbReference type="ChEBI" id="CHEBI:49883"/>
        <label>1</label>
    </ligand>
</feature>
<feature type="binding site" evidence="1">
    <location>
        <position position="183"/>
    </location>
    <ligand>
        <name>[4Fe-4S] cluster</name>
        <dbReference type="ChEBI" id="CHEBI:49883"/>
        <label>2</label>
        <note>4Fe-4S-S-AdoMet</note>
    </ligand>
</feature>
<feature type="binding site" evidence="1">
    <location>
        <position position="187"/>
    </location>
    <ligand>
        <name>[4Fe-4S] cluster</name>
        <dbReference type="ChEBI" id="CHEBI:49883"/>
        <label>2</label>
        <note>4Fe-4S-S-AdoMet</note>
    </ligand>
</feature>
<feature type="binding site" evidence="1">
    <location>
        <position position="190"/>
    </location>
    <ligand>
        <name>[4Fe-4S] cluster</name>
        <dbReference type="ChEBI" id="CHEBI:49883"/>
        <label>2</label>
        <note>4Fe-4S-S-AdoMet</note>
    </ligand>
</feature>
<keyword id="KW-0004">4Fe-4S</keyword>
<keyword id="KW-0963">Cytoplasm</keyword>
<keyword id="KW-0408">Iron</keyword>
<keyword id="KW-0411">Iron-sulfur</keyword>
<keyword id="KW-0479">Metal-binding</keyword>
<keyword id="KW-1185">Reference proteome</keyword>
<keyword id="KW-0949">S-adenosyl-L-methionine</keyword>
<keyword id="KW-0808">Transferase</keyword>
<keyword id="KW-0819">tRNA processing</keyword>
<dbReference type="EC" id="2.8.4.3" evidence="1"/>
<dbReference type="EMBL" id="AL591688">
    <property type="protein sequence ID" value="CAC41842.1"/>
    <property type="molecule type" value="Genomic_DNA"/>
</dbReference>
<dbReference type="RefSeq" id="NP_384511.1">
    <property type="nucleotide sequence ID" value="NC_003047.1"/>
</dbReference>
<dbReference type="RefSeq" id="WP_010968554.1">
    <property type="nucleotide sequence ID" value="NC_003047.1"/>
</dbReference>
<dbReference type="SMR" id="Q92SI7"/>
<dbReference type="EnsemblBacteria" id="CAC41842">
    <property type="protein sequence ID" value="CAC41842"/>
    <property type="gene ID" value="SMc01115"/>
</dbReference>
<dbReference type="KEGG" id="sme:SMc01115"/>
<dbReference type="PATRIC" id="fig|266834.11.peg.1778"/>
<dbReference type="eggNOG" id="COG0621">
    <property type="taxonomic scope" value="Bacteria"/>
</dbReference>
<dbReference type="HOGENOM" id="CLU_018697_2_0_5"/>
<dbReference type="OrthoDB" id="9805215at2"/>
<dbReference type="Proteomes" id="UP000001976">
    <property type="component" value="Chromosome"/>
</dbReference>
<dbReference type="GO" id="GO:0005829">
    <property type="term" value="C:cytosol"/>
    <property type="evidence" value="ECO:0007669"/>
    <property type="project" value="TreeGrafter"/>
</dbReference>
<dbReference type="GO" id="GO:0051539">
    <property type="term" value="F:4 iron, 4 sulfur cluster binding"/>
    <property type="evidence" value="ECO:0007669"/>
    <property type="project" value="UniProtKB-UniRule"/>
</dbReference>
<dbReference type="GO" id="GO:0046872">
    <property type="term" value="F:metal ion binding"/>
    <property type="evidence" value="ECO:0007669"/>
    <property type="project" value="UniProtKB-KW"/>
</dbReference>
<dbReference type="GO" id="GO:0035597">
    <property type="term" value="F:N6-isopentenyladenosine methylthiotransferase activity"/>
    <property type="evidence" value="ECO:0007669"/>
    <property type="project" value="TreeGrafter"/>
</dbReference>
<dbReference type="CDD" id="cd01335">
    <property type="entry name" value="Radical_SAM"/>
    <property type="match status" value="1"/>
</dbReference>
<dbReference type="FunFam" id="3.40.50.12160:FF:000003">
    <property type="entry name" value="CDK5 regulatory subunit-associated protein 1"/>
    <property type="match status" value="1"/>
</dbReference>
<dbReference type="FunFam" id="3.80.30.20:FF:000001">
    <property type="entry name" value="tRNA-2-methylthio-N(6)-dimethylallyladenosine synthase 2"/>
    <property type="match status" value="1"/>
</dbReference>
<dbReference type="Gene3D" id="3.40.50.12160">
    <property type="entry name" value="Methylthiotransferase, N-terminal domain"/>
    <property type="match status" value="1"/>
</dbReference>
<dbReference type="Gene3D" id="3.80.30.20">
    <property type="entry name" value="tm_1862 like domain"/>
    <property type="match status" value="1"/>
</dbReference>
<dbReference type="HAMAP" id="MF_01864">
    <property type="entry name" value="tRNA_metthiotr_MiaB"/>
    <property type="match status" value="1"/>
</dbReference>
<dbReference type="InterPro" id="IPR006638">
    <property type="entry name" value="Elp3/MiaA/NifB-like_rSAM"/>
</dbReference>
<dbReference type="InterPro" id="IPR005839">
    <property type="entry name" value="Methylthiotransferase"/>
</dbReference>
<dbReference type="InterPro" id="IPR020612">
    <property type="entry name" value="Methylthiotransferase_CS"/>
</dbReference>
<dbReference type="InterPro" id="IPR013848">
    <property type="entry name" value="Methylthiotransferase_N"/>
</dbReference>
<dbReference type="InterPro" id="IPR038135">
    <property type="entry name" value="Methylthiotransferase_N_sf"/>
</dbReference>
<dbReference type="InterPro" id="IPR006463">
    <property type="entry name" value="MiaB_methiolase"/>
</dbReference>
<dbReference type="InterPro" id="IPR007197">
    <property type="entry name" value="rSAM"/>
</dbReference>
<dbReference type="InterPro" id="IPR023404">
    <property type="entry name" value="rSAM_horseshoe"/>
</dbReference>
<dbReference type="InterPro" id="IPR002792">
    <property type="entry name" value="TRAM_dom"/>
</dbReference>
<dbReference type="NCBIfam" id="TIGR01574">
    <property type="entry name" value="miaB-methiolase"/>
    <property type="match status" value="1"/>
</dbReference>
<dbReference type="NCBIfam" id="TIGR00089">
    <property type="entry name" value="MiaB/RimO family radical SAM methylthiotransferase"/>
    <property type="match status" value="1"/>
</dbReference>
<dbReference type="PANTHER" id="PTHR43020">
    <property type="entry name" value="CDK5 REGULATORY SUBUNIT-ASSOCIATED PROTEIN 1"/>
    <property type="match status" value="1"/>
</dbReference>
<dbReference type="PANTHER" id="PTHR43020:SF2">
    <property type="entry name" value="MITOCHONDRIAL TRNA METHYLTHIOTRANSFERASE CDK5RAP1"/>
    <property type="match status" value="1"/>
</dbReference>
<dbReference type="Pfam" id="PF04055">
    <property type="entry name" value="Radical_SAM"/>
    <property type="match status" value="1"/>
</dbReference>
<dbReference type="Pfam" id="PF01938">
    <property type="entry name" value="TRAM"/>
    <property type="match status" value="1"/>
</dbReference>
<dbReference type="Pfam" id="PF00919">
    <property type="entry name" value="UPF0004"/>
    <property type="match status" value="1"/>
</dbReference>
<dbReference type="SFLD" id="SFLDF00273">
    <property type="entry name" value="(dimethylallyl)adenosine_tRNA"/>
    <property type="match status" value="1"/>
</dbReference>
<dbReference type="SFLD" id="SFLDG01082">
    <property type="entry name" value="B12-binding_domain_containing"/>
    <property type="match status" value="1"/>
</dbReference>
<dbReference type="SFLD" id="SFLDG01061">
    <property type="entry name" value="methylthiotransferase"/>
    <property type="match status" value="1"/>
</dbReference>
<dbReference type="SMART" id="SM00729">
    <property type="entry name" value="Elp3"/>
    <property type="match status" value="1"/>
</dbReference>
<dbReference type="SUPFAM" id="SSF102114">
    <property type="entry name" value="Radical SAM enzymes"/>
    <property type="match status" value="1"/>
</dbReference>
<dbReference type="PROSITE" id="PS51449">
    <property type="entry name" value="MTTASE_N"/>
    <property type="match status" value="1"/>
</dbReference>
<dbReference type="PROSITE" id="PS01278">
    <property type="entry name" value="MTTASE_RADICAL"/>
    <property type="match status" value="1"/>
</dbReference>
<dbReference type="PROSITE" id="PS51918">
    <property type="entry name" value="RADICAL_SAM"/>
    <property type="match status" value="1"/>
</dbReference>
<dbReference type="PROSITE" id="PS50926">
    <property type="entry name" value="TRAM"/>
    <property type="match status" value="1"/>
</dbReference>
<organism>
    <name type="scientific">Rhizobium meliloti (strain 1021)</name>
    <name type="common">Ensifer meliloti</name>
    <name type="synonym">Sinorhizobium meliloti</name>
    <dbReference type="NCBI Taxonomy" id="266834"/>
    <lineage>
        <taxon>Bacteria</taxon>
        <taxon>Pseudomonadati</taxon>
        <taxon>Pseudomonadota</taxon>
        <taxon>Alphaproteobacteria</taxon>
        <taxon>Hyphomicrobiales</taxon>
        <taxon>Rhizobiaceae</taxon>
        <taxon>Sinorhizobium/Ensifer group</taxon>
        <taxon>Sinorhizobium</taxon>
    </lineage>
</organism>
<gene>
    <name evidence="1" type="primary">miaB</name>
    <name type="ordered locus">R00405</name>
    <name type="ORF">SMc01115</name>
</gene>
<sequence>MTQETALLSTSPEGGDLNVPARKVFVKTYGCQMNVYDSDRMSDALSRDGYVATDVLEDADFVLLNTCHIREKAAEKVYSELGRLRELKKAKALEGREMLIGVAGCVAQAEGDEILRRVPAVDLVIGPQTYHRLPDALKRARAGQRIVETEYAIEDKFVHLPAPDKAKTRARGVTAFLTVQEGCDKFCTFCVVPYTRGSEVSRPVAQIVAEAEKLVEGGVREITLLGQNVNAWHGEGPHGREWSLGDLLRRLGEIDGLARLRYTTSHPRDMDDSLIEAHRSMAKLMPYLHLPVQSGSDRILKAMNRRHTAAEYLALVERIRAAQPDLALSGDFIVGFPGETDQDFEDTLRLVEEVNYAQAFSFKYSTRPGTPGAELKEQVPEDVKAKRLEILQALLVKQQRGFAEACVGREIDLLLEKPGRMPGQLVGRSPWLQPVNVDAKASQIGDIIRVRITKAGPNSLFAEMIGESDARS</sequence>
<evidence type="ECO:0000255" key="1">
    <source>
        <dbReference type="HAMAP-Rule" id="MF_01864"/>
    </source>
</evidence>
<evidence type="ECO:0000255" key="2">
    <source>
        <dbReference type="PROSITE-ProRule" id="PRU01266"/>
    </source>
</evidence>
<accession>Q92SI7</accession>
<proteinExistence type="inferred from homology"/>
<reference key="1">
    <citation type="journal article" date="2001" name="Proc. Natl. Acad. Sci. U.S.A.">
        <title>Analysis of the chromosome sequence of the legume symbiont Sinorhizobium meliloti strain 1021.</title>
        <authorList>
            <person name="Capela D."/>
            <person name="Barloy-Hubler F."/>
            <person name="Gouzy J."/>
            <person name="Bothe G."/>
            <person name="Ampe F."/>
            <person name="Batut J."/>
            <person name="Boistard P."/>
            <person name="Becker A."/>
            <person name="Boutry M."/>
            <person name="Cadieu E."/>
            <person name="Dreano S."/>
            <person name="Gloux S."/>
            <person name="Godrie T."/>
            <person name="Goffeau A."/>
            <person name="Kahn D."/>
            <person name="Kiss E."/>
            <person name="Lelaure V."/>
            <person name="Masuy D."/>
            <person name="Pohl T."/>
            <person name="Portetelle D."/>
            <person name="Puehler A."/>
            <person name="Purnelle B."/>
            <person name="Ramsperger U."/>
            <person name="Renard C."/>
            <person name="Thebault P."/>
            <person name="Vandenbol M."/>
            <person name="Weidner S."/>
            <person name="Galibert F."/>
        </authorList>
    </citation>
    <scope>NUCLEOTIDE SEQUENCE [LARGE SCALE GENOMIC DNA]</scope>
    <source>
        <strain>1021</strain>
    </source>
</reference>
<reference key="2">
    <citation type="journal article" date="2001" name="Science">
        <title>The composite genome of the legume symbiont Sinorhizobium meliloti.</title>
        <authorList>
            <person name="Galibert F."/>
            <person name="Finan T.M."/>
            <person name="Long S.R."/>
            <person name="Puehler A."/>
            <person name="Abola P."/>
            <person name="Ampe F."/>
            <person name="Barloy-Hubler F."/>
            <person name="Barnett M.J."/>
            <person name="Becker A."/>
            <person name="Boistard P."/>
            <person name="Bothe G."/>
            <person name="Boutry M."/>
            <person name="Bowser L."/>
            <person name="Buhrmester J."/>
            <person name="Cadieu E."/>
            <person name="Capela D."/>
            <person name="Chain P."/>
            <person name="Cowie A."/>
            <person name="Davis R.W."/>
            <person name="Dreano S."/>
            <person name="Federspiel N.A."/>
            <person name="Fisher R.F."/>
            <person name="Gloux S."/>
            <person name="Godrie T."/>
            <person name="Goffeau A."/>
            <person name="Golding B."/>
            <person name="Gouzy J."/>
            <person name="Gurjal M."/>
            <person name="Hernandez-Lucas I."/>
            <person name="Hong A."/>
            <person name="Huizar L."/>
            <person name="Hyman R.W."/>
            <person name="Jones T."/>
            <person name="Kahn D."/>
            <person name="Kahn M.L."/>
            <person name="Kalman S."/>
            <person name="Keating D.H."/>
            <person name="Kiss E."/>
            <person name="Komp C."/>
            <person name="Lelaure V."/>
            <person name="Masuy D."/>
            <person name="Palm C."/>
            <person name="Peck M.C."/>
            <person name="Pohl T.M."/>
            <person name="Portetelle D."/>
            <person name="Purnelle B."/>
            <person name="Ramsperger U."/>
            <person name="Surzycki R."/>
            <person name="Thebault P."/>
            <person name="Vandenbol M."/>
            <person name="Vorhoelter F.J."/>
            <person name="Weidner S."/>
            <person name="Wells D.H."/>
            <person name="Wong K."/>
            <person name="Yeh K.-C."/>
            <person name="Batut J."/>
        </authorList>
    </citation>
    <scope>NUCLEOTIDE SEQUENCE [LARGE SCALE GENOMIC DNA]</scope>
    <source>
        <strain>1021</strain>
    </source>
</reference>
<comment type="function">
    <text evidence="1">Catalyzes the methylthiolation of N6-(dimethylallyl)adenosine (i(6)A), leading to the formation of 2-methylthio-N6-(dimethylallyl)adenosine (ms(2)i(6)A) at position 37 in tRNAs that read codons beginning with uridine.</text>
</comment>
<comment type="catalytic activity">
    <reaction evidence="1">
        <text>N(6)-dimethylallyladenosine(37) in tRNA + (sulfur carrier)-SH + AH2 + 2 S-adenosyl-L-methionine = 2-methylsulfanyl-N(6)-dimethylallyladenosine(37) in tRNA + (sulfur carrier)-H + 5'-deoxyadenosine + L-methionine + A + S-adenosyl-L-homocysteine + 2 H(+)</text>
        <dbReference type="Rhea" id="RHEA:37067"/>
        <dbReference type="Rhea" id="RHEA-COMP:10375"/>
        <dbReference type="Rhea" id="RHEA-COMP:10376"/>
        <dbReference type="Rhea" id="RHEA-COMP:14737"/>
        <dbReference type="Rhea" id="RHEA-COMP:14739"/>
        <dbReference type="ChEBI" id="CHEBI:13193"/>
        <dbReference type="ChEBI" id="CHEBI:15378"/>
        <dbReference type="ChEBI" id="CHEBI:17319"/>
        <dbReference type="ChEBI" id="CHEBI:17499"/>
        <dbReference type="ChEBI" id="CHEBI:29917"/>
        <dbReference type="ChEBI" id="CHEBI:57844"/>
        <dbReference type="ChEBI" id="CHEBI:57856"/>
        <dbReference type="ChEBI" id="CHEBI:59789"/>
        <dbReference type="ChEBI" id="CHEBI:64428"/>
        <dbReference type="ChEBI" id="CHEBI:74415"/>
        <dbReference type="ChEBI" id="CHEBI:74417"/>
        <dbReference type="EC" id="2.8.4.3"/>
    </reaction>
</comment>
<comment type="cofactor">
    <cofactor evidence="1">
        <name>[4Fe-4S] cluster</name>
        <dbReference type="ChEBI" id="CHEBI:49883"/>
    </cofactor>
    <text evidence="1">Binds 2 [4Fe-4S] clusters. One cluster is coordinated with 3 cysteines and an exchangeable S-adenosyl-L-methionine.</text>
</comment>
<comment type="subunit">
    <text evidence="1">Monomer.</text>
</comment>
<comment type="subcellular location">
    <subcellularLocation>
        <location evidence="1">Cytoplasm</location>
    </subcellularLocation>
</comment>
<comment type="similarity">
    <text evidence="1">Belongs to the methylthiotransferase family. MiaB subfamily.</text>
</comment>
<name>MIAB_RHIME</name>
<protein>
    <recommendedName>
        <fullName evidence="1">tRNA-2-methylthio-N(6)-dimethylallyladenosine synthase</fullName>
        <ecNumber evidence="1">2.8.4.3</ecNumber>
    </recommendedName>
    <alternativeName>
        <fullName evidence="1">(Dimethylallyl)adenosine tRNA methylthiotransferase MiaB</fullName>
    </alternativeName>
    <alternativeName>
        <fullName evidence="1">tRNA-i(6)A37 methylthiotransferase</fullName>
    </alternativeName>
</protein>